<keyword id="KW-0002">3D-structure</keyword>
<keyword id="KW-0119">Carbohydrate metabolism</keyword>
<keyword id="KW-0136">Cellulose degradation</keyword>
<keyword id="KW-0326">Glycosidase</keyword>
<keyword id="KW-0378">Hydrolase</keyword>
<keyword id="KW-0624">Polysaccharide degradation</keyword>
<gene>
    <name type="primary">bglA</name>
</gene>
<evidence type="ECO:0000255" key="1"/>
<evidence type="ECO:0000255" key="2">
    <source>
        <dbReference type="PROSITE-ProRule" id="PRU10055"/>
    </source>
</evidence>
<evidence type="ECO:0000305" key="3"/>
<evidence type="ECO:0007829" key="4">
    <source>
        <dbReference type="PDB" id="1BGG"/>
    </source>
</evidence>
<evidence type="ECO:0007829" key="5">
    <source>
        <dbReference type="PDB" id="1E4I"/>
    </source>
</evidence>
<evidence type="ECO:0007829" key="6">
    <source>
        <dbReference type="PDB" id="1TR1"/>
    </source>
</evidence>
<sequence>MTIFQFPQDFMWGTATAAYQIEGAYQEDGRGLSIWDTFAHTPGKVFNGDNGNVACDSYHRYEEDIRLMKELGIRTYRFSVSWPRIFPNGDGEVNQEGLDYYHRVVDLLNDNGIEPFCTLYHWDLPQALQDAGGWGNRRTIQAFVQFAETMFREFHGKIQHWLTFNEPWCIAFLSNMLGVHAPGLTNLQTAIDVGHHLLVAHGLSVRRFRELGTSGQIGIAPNVSWAVPYSTSEEDKAACARTISLHSDWFLQPIYQGSYPQFLVDWFAEQGATVPIQDGDMDIIGEPIDMIGINYYSMSVNRFNPEAGFLQSEEINMGLPVTDIGWPVESRGLYEVLHYLQKYGNIDIYITENGACINDEVVNGKVQDDRRISYMQQHLVQVHRTIHDGLHVKGYMAWSLLDNFEWAEGYNMRFGMIHVDFRTQVRTPKESYYWYRNVVSNNWLETRR</sequence>
<comment type="function">
    <text>BglA is intracellular and cleaves cellobiose probably through inorganic phosphate mediated hydrolysis.</text>
</comment>
<comment type="catalytic activity">
    <reaction>
        <text>Hydrolysis of terminal, non-reducing beta-D-glucosyl residues with release of beta-D-glucose.</text>
        <dbReference type="EC" id="3.2.1.21"/>
    </reaction>
</comment>
<comment type="subunit">
    <text>Homooctamer.</text>
</comment>
<comment type="similarity">
    <text evidence="3">Belongs to the glycosyl hydrolase 1 family.</text>
</comment>
<dbReference type="EC" id="3.2.1.21"/>
<dbReference type="EMBL" id="M60210">
    <property type="protein sequence ID" value="AAA22263.1"/>
    <property type="molecule type" value="Genomic_DNA"/>
</dbReference>
<dbReference type="PIR" id="JW0037">
    <property type="entry name" value="JW0037"/>
</dbReference>
<dbReference type="RefSeq" id="WP_019688628.1">
    <property type="nucleotide sequence ID" value="NZ_UGSC01000001.1"/>
</dbReference>
<dbReference type="PDB" id="1BGA">
    <property type="method" value="X-ray"/>
    <property type="resolution" value="2.40 A"/>
    <property type="chains" value="A/B/C/D=2-448"/>
</dbReference>
<dbReference type="PDB" id="1BGG">
    <property type="method" value="X-ray"/>
    <property type="resolution" value="2.30 A"/>
    <property type="chains" value="A/B/C/D=1-448"/>
</dbReference>
<dbReference type="PDB" id="1E4I">
    <property type="method" value="X-ray"/>
    <property type="resolution" value="2.00 A"/>
    <property type="chains" value="A=2-448"/>
</dbReference>
<dbReference type="PDB" id="1TR1">
    <property type="method" value="X-ray"/>
    <property type="resolution" value="2.20 A"/>
    <property type="chains" value="A/B/C/D=2-448"/>
</dbReference>
<dbReference type="PDB" id="1UYQ">
    <property type="method" value="X-ray"/>
    <property type="resolution" value="2.20 A"/>
    <property type="chains" value="A=2-448"/>
</dbReference>
<dbReference type="PDB" id="6QWI">
    <property type="method" value="X-ray"/>
    <property type="resolution" value="2.85 A"/>
    <property type="chains" value="A/B=1-448"/>
</dbReference>
<dbReference type="PDB" id="6R4K">
    <property type="method" value="X-ray"/>
    <property type="resolution" value="2.13 A"/>
    <property type="chains" value="A/B=1-448"/>
</dbReference>
<dbReference type="PDBsum" id="1BGA"/>
<dbReference type="PDBsum" id="1BGG"/>
<dbReference type="PDBsum" id="1E4I"/>
<dbReference type="PDBsum" id="1TR1"/>
<dbReference type="PDBsum" id="1UYQ"/>
<dbReference type="PDBsum" id="6QWI"/>
<dbReference type="PDBsum" id="6R4K"/>
<dbReference type="SMR" id="P22073"/>
<dbReference type="DrugBank" id="DB02658">
    <property type="generic name" value="2,4-Dinitrophenyl 2-Deoxy-2-Fluoro-Beta-D-Allopyranoside"/>
</dbReference>
<dbReference type="DrugBank" id="DB04282">
    <property type="generic name" value="2-deoxy-2-fluoro-Alpha-D-glucose"/>
</dbReference>
<dbReference type="DrugBank" id="DB04304">
    <property type="generic name" value="L-Gluconic Acid"/>
</dbReference>
<dbReference type="CAZy" id="GH1">
    <property type="family name" value="Glycoside Hydrolase Family 1"/>
</dbReference>
<dbReference type="eggNOG" id="COG2723">
    <property type="taxonomic scope" value="Bacteria"/>
</dbReference>
<dbReference type="BRENDA" id="3.2.1.21">
    <property type="organism ID" value="683"/>
</dbReference>
<dbReference type="EvolutionaryTrace" id="P22073"/>
<dbReference type="GO" id="GO:0005829">
    <property type="term" value="C:cytosol"/>
    <property type="evidence" value="ECO:0007669"/>
    <property type="project" value="TreeGrafter"/>
</dbReference>
<dbReference type="GO" id="GO:0008422">
    <property type="term" value="F:beta-glucosidase activity"/>
    <property type="evidence" value="ECO:0007669"/>
    <property type="project" value="UniProtKB-EC"/>
</dbReference>
<dbReference type="GO" id="GO:0030245">
    <property type="term" value="P:cellulose catabolic process"/>
    <property type="evidence" value="ECO:0007669"/>
    <property type="project" value="UniProtKB-KW"/>
</dbReference>
<dbReference type="FunFam" id="3.20.20.80:FF:000004">
    <property type="entry name" value="Beta-glucosidase 6-phospho-beta-glucosidase"/>
    <property type="match status" value="1"/>
</dbReference>
<dbReference type="Gene3D" id="3.20.20.80">
    <property type="entry name" value="Glycosidases"/>
    <property type="match status" value="1"/>
</dbReference>
<dbReference type="InterPro" id="IPR001360">
    <property type="entry name" value="Glyco_hydro_1"/>
</dbReference>
<dbReference type="InterPro" id="IPR018120">
    <property type="entry name" value="Glyco_hydro_1_AS"/>
</dbReference>
<dbReference type="InterPro" id="IPR017736">
    <property type="entry name" value="Glyco_hydro_1_beta-glucosidase"/>
</dbReference>
<dbReference type="InterPro" id="IPR033132">
    <property type="entry name" value="Glyco_hydro_1_N_CS"/>
</dbReference>
<dbReference type="InterPro" id="IPR017853">
    <property type="entry name" value="Glycoside_hydrolase_SF"/>
</dbReference>
<dbReference type="NCBIfam" id="TIGR03356">
    <property type="entry name" value="BGL"/>
    <property type="match status" value="1"/>
</dbReference>
<dbReference type="PANTHER" id="PTHR10353">
    <property type="entry name" value="GLYCOSYL HYDROLASE"/>
    <property type="match status" value="1"/>
</dbReference>
<dbReference type="PANTHER" id="PTHR10353:SF36">
    <property type="entry name" value="LP05116P"/>
    <property type="match status" value="1"/>
</dbReference>
<dbReference type="Pfam" id="PF00232">
    <property type="entry name" value="Glyco_hydro_1"/>
    <property type="match status" value="1"/>
</dbReference>
<dbReference type="PRINTS" id="PR00131">
    <property type="entry name" value="GLHYDRLASE1"/>
</dbReference>
<dbReference type="SUPFAM" id="SSF51445">
    <property type="entry name" value="(Trans)glycosidases"/>
    <property type="match status" value="1"/>
</dbReference>
<dbReference type="PROSITE" id="PS00572">
    <property type="entry name" value="GLYCOSYL_HYDROL_F1_1"/>
    <property type="match status" value="1"/>
</dbReference>
<dbReference type="PROSITE" id="PS00653">
    <property type="entry name" value="GLYCOSYL_HYDROL_F1_2"/>
    <property type="match status" value="1"/>
</dbReference>
<protein>
    <recommendedName>
        <fullName>Beta-glucosidase A</fullName>
        <shortName>BGA</shortName>
        <ecNumber>3.2.1.21</ecNumber>
    </recommendedName>
    <alternativeName>
        <fullName>Amygdalase</fullName>
    </alternativeName>
    <alternativeName>
        <fullName>Beta-D-glucoside glucohydrolase</fullName>
    </alternativeName>
    <alternativeName>
        <fullName>Cellobiase</fullName>
    </alternativeName>
    <alternativeName>
        <fullName>Gentiobiase</fullName>
    </alternativeName>
</protein>
<name>BGLA_PAEPO</name>
<organism>
    <name type="scientific">Paenibacillus polymyxa</name>
    <name type="common">Bacillus polymyxa</name>
    <dbReference type="NCBI Taxonomy" id="1406"/>
    <lineage>
        <taxon>Bacteria</taxon>
        <taxon>Bacillati</taxon>
        <taxon>Bacillota</taxon>
        <taxon>Bacilli</taxon>
        <taxon>Bacillales</taxon>
        <taxon>Paenibacillaceae</taxon>
        <taxon>Paenibacillus</taxon>
    </lineage>
</organism>
<proteinExistence type="evidence at protein level"/>
<accession>P22073</accession>
<reference key="1">
    <citation type="journal article" date="1990" name="Gene">
        <title>Sequences and homology analysis of two genes encoding beta-glucosidases from Bacillus polymyxa.</title>
        <authorList>
            <person name="Gonzalez-Candelas L."/>
            <person name="Ramon D."/>
            <person name="Polaina J."/>
        </authorList>
    </citation>
    <scope>NUCLEOTIDE SEQUENCE [GENOMIC DNA]</scope>
</reference>
<reference key="2">
    <citation type="journal article" date="1998" name="J. Mol. Biol.">
        <title>Crystal structure of beta-glucosidase A from Bacillus polymyxa: insights into the catalytic activity in family 1 glycosyl hydrolases.</title>
        <authorList>
            <person name="Sanz-Aparicio J."/>
            <person name="Hermoso J.A."/>
            <person name="Martinez-Ripoll M."/>
            <person name="Lequerica J.L."/>
            <person name="Polaina J."/>
        </authorList>
    </citation>
    <scope>X-RAY CRYSTALLOGRAPHY (2.4 ANGSTROMS)</scope>
    <source>
        <strain>ATCC 842 / DSM 36 / JCM 2507 / NBRC 15309 / NCIMB 8158 / NCTC 10343 / NRRL B-4317 / VKM B-514</strain>
    </source>
</reference>
<feature type="chain" id="PRO_0000063871" description="Beta-glucosidase A">
    <location>
        <begin position="1"/>
        <end position="448"/>
    </location>
</feature>
<feature type="active site" description="Proton donor" evidence="1">
    <location>
        <position position="166"/>
    </location>
</feature>
<feature type="active site" description="Nucleophile" evidence="2">
    <location>
        <position position="352"/>
    </location>
</feature>
<feature type="strand" evidence="5">
    <location>
        <begin position="3"/>
        <end position="5"/>
    </location>
</feature>
<feature type="strand" evidence="5">
    <location>
        <begin position="11"/>
        <end position="15"/>
    </location>
</feature>
<feature type="helix" evidence="5">
    <location>
        <begin position="18"/>
        <end position="21"/>
    </location>
</feature>
<feature type="helix" evidence="5">
    <location>
        <begin position="27"/>
        <end position="29"/>
    </location>
</feature>
<feature type="helix" evidence="5">
    <location>
        <begin position="34"/>
        <end position="39"/>
    </location>
</feature>
<feature type="turn" evidence="5">
    <location>
        <begin position="42"/>
        <end position="44"/>
    </location>
</feature>
<feature type="helix" evidence="5">
    <location>
        <begin position="46"/>
        <end position="48"/>
    </location>
</feature>
<feature type="strand" evidence="5">
    <location>
        <begin position="51"/>
        <end position="53"/>
    </location>
</feature>
<feature type="helix" evidence="4">
    <location>
        <begin position="54"/>
        <end position="56"/>
    </location>
</feature>
<feature type="helix" evidence="5">
    <location>
        <begin position="57"/>
        <end position="71"/>
    </location>
</feature>
<feature type="strand" evidence="5">
    <location>
        <begin position="74"/>
        <end position="79"/>
    </location>
</feature>
<feature type="helix" evidence="5">
    <location>
        <begin position="82"/>
        <end position="85"/>
    </location>
</feature>
<feature type="strand" evidence="5">
    <location>
        <begin position="89"/>
        <end position="91"/>
    </location>
</feature>
<feature type="helix" evidence="5">
    <location>
        <begin position="95"/>
        <end position="110"/>
    </location>
</feature>
<feature type="strand" evidence="5">
    <location>
        <begin position="114"/>
        <end position="122"/>
    </location>
</feature>
<feature type="helix" evidence="5">
    <location>
        <begin position="126"/>
        <end position="130"/>
    </location>
</feature>
<feature type="turn" evidence="5">
    <location>
        <begin position="131"/>
        <end position="134"/>
    </location>
</feature>
<feature type="helix" evidence="5">
    <location>
        <begin position="138"/>
        <end position="153"/>
    </location>
</feature>
<feature type="helix" evidence="6">
    <location>
        <begin position="155"/>
        <end position="157"/>
    </location>
</feature>
<feature type="strand" evidence="5">
    <location>
        <begin position="160"/>
        <end position="165"/>
    </location>
</feature>
<feature type="helix" evidence="5">
    <location>
        <begin position="167"/>
        <end position="175"/>
    </location>
</feature>
<feature type="helix" evidence="5">
    <location>
        <begin position="187"/>
        <end position="211"/>
    </location>
</feature>
<feature type="strand" evidence="5">
    <location>
        <begin position="214"/>
        <end position="220"/>
    </location>
</feature>
<feature type="strand" evidence="5">
    <location>
        <begin position="226"/>
        <end position="231"/>
    </location>
</feature>
<feature type="helix" evidence="5">
    <location>
        <begin position="233"/>
        <end position="246"/>
    </location>
</feature>
<feature type="helix" evidence="5">
    <location>
        <begin position="248"/>
        <end position="256"/>
    </location>
</feature>
<feature type="helix" evidence="5">
    <location>
        <begin position="261"/>
        <end position="269"/>
    </location>
</feature>
<feature type="helix" evidence="5">
    <location>
        <begin position="280"/>
        <end position="284"/>
    </location>
</feature>
<feature type="strand" evidence="5">
    <location>
        <begin position="289"/>
        <end position="294"/>
    </location>
</feature>
<feature type="strand" evidence="5">
    <location>
        <begin position="299"/>
        <end position="303"/>
    </location>
</feature>
<feature type="turn" evidence="5">
    <location>
        <begin position="308"/>
        <end position="311"/>
    </location>
</feature>
<feature type="strand" evidence="5">
    <location>
        <begin position="312"/>
        <end position="314"/>
    </location>
</feature>
<feature type="helix" evidence="5">
    <location>
        <begin position="331"/>
        <end position="339"/>
    </location>
</feature>
<feature type="helix" evidence="5">
    <location>
        <begin position="340"/>
        <end position="343"/>
    </location>
</feature>
<feature type="strand" evidence="5">
    <location>
        <begin position="348"/>
        <end position="353"/>
    </location>
</feature>
<feature type="helix" evidence="5">
    <location>
        <begin position="369"/>
        <end position="387"/>
    </location>
</feature>
<feature type="strand" evidence="5">
    <location>
        <begin position="392"/>
        <end position="398"/>
    </location>
</feature>
<feature type="helix" evidence="5">
    <location>
        <begin position="406"/>
        <end position="411"/>
    </location>
</feature>
<feature type="strand" evidence="5">
    <location>
        <begin position="416"/>
        <end position="419"/>
    </location>
</feature>
<feature type="turn" evidence="5">
    <location>
        <begin position="421"/>
        <end position="423"/>
    </location>
</feature>
<feature type="strand" evidence="5">
    <location>
        <begin position="426"/>
        <end position="428"/>
    </location>
</feature>
<feature type="helix" evidence="5">
    <location>
        <begin position="430"/>
        <end position="441"/>
    </location>
</feature>
<feature type="strand" evidence="5">
    <location>
        <begin position="443"/>
        <end position="445"/>
    </location>
</feature>